<name>CYB_NATTU</name>
<sequence>MTNIRKSHPLTKIINNSFIDLPTPSSISSWWNFGSLLGICLAVQILTGLFLAMHYTADTATAFNSVTHICRDVNYGWILRYMHANGASMFFICLYLHVGRGLYYGSYTYTETWNVGIMLLFAVMATAFMGYVLPWGQMSFWGATVITNLLSAIPYIGTNLVEWIWGGFSVDKATLTRFFAFHFILPFIISAMVMVHLLFLHETGSNNPTGIPSNMDMIPFHPYHTIKDILGLLLMLTALLVLVMFSPDLLGDPDNYIPANPLNTPPHIKPEWYFLFAYAILRSIPNKLGGVLALVLSILILAIIPLLHTSKQRSMMFRPISQCLFWLLVADMLTLTWIGGQPVEHPYIIIGQLASILYFSIILIFMPLASLTENHLLXW</sequence>
<keyword id="KW-0249">Electron transport</keyword>
<keyword id="KW-0349">Heme</keyword>
<keyword id="KW-0408">Iron</keyword>
<keyword id="KW-0472">Membrane</keyword>
<keyword id="KW-0479">Metal-binding</keyword>
<keyword id="KW-0496">Mitochondrion</keyword>
<keyword id="KW-0999">Mitochondrion inner membrane</keyword>
<keyword id="KW-0679">Respiratory chain</keyword>
<keyword id="KW-0812">Transmembrane</keyword>
<keyword id="KW-1133">Transmembrane helix</keyword>
<keyword id="KW-0813">Transport</keyword>
<keyword id="KW-0830">Ubiquinone</keyword>
<proteinExistence type="inferred from homology"/>
<dbReference type="EMBL" id="AY621009">
    <property type="protein sequence ID" value="AAU04732.1"/>
    <property type="molecule type" value="Genomic_DNA"/>
</dbReference>
<dbReference type="GO" id="GO:0005743">
    <property type="term" value="C:mitochondrial inner membrane"/>
    <property type="evidence" value="ECO:0007669"/>
    <property type="project" value="UniProtKB-SubCell"/>
</dbReference>
<dbReference type="GO" id="GO:0045275">
    <property type="term" value="C:respiratory chain complex III"/>
    <property type="evidence" value="ECO:0007669"/>
    <property type="project" value="InterPro"/>
</dbReference>
<dbReference type="GO" id="GO:0046872">
    <property type="term" value="F:metal ion binding"/>
    <property type="evidence" value="ECO:0007669"/>
    <property type="project" value="UniProtKB-KW"/>
</dbReference>
<dbReference type="GO" id="GO:0008121">
    <property type="term" value="F:ubiquinol-cytochrome-c reductase activity"/>
    <property type="evidence" value="ECO:0007669"/>
    <property type="project" value="InterPro"/>
</dbReference>
<dbReference type="GO" id="GO:0006122">
    <property type="term" value="P:mitochondrial electron transport, ubiquinol to cytochrome c"/>
    <property type="evidence" value="ECO:0007669"/>
    <property type="project" value="TreeGrafter"/>
</dbReference>
<dbReference type="CDD" id="cd00290">
    <property type="entry name" value="cytochrome_b_C"/>
    <property type="match status" value="1"/>
</dbReference>
<dbReference type="CDD" id="cd00284">
    <property type="entry name" value="Cytochrome_b_N"/>
    <property type="match status" value="1"/>
</dbReference>
<dbReference type="FunFam" id="1.20.810.10:FF:000002">
    <property type="entry name" value="Cytochrome b"/>
    <property type="match status" value="1"/>
</dbReference>
<dbReference type="Gene3D" id="1.20.810.10">
    <property type="entry name" value="Cytochrome Bc1 Complex, Chain C"/>
    <property type="match status" value="1"/>
</dbReference>
<dbReference type="InterPro" id="IPR005798">
    <property type="entry name" value="Cyt_b/b6_C"/>
</dbReference>
<dbReference type="InterPro" id="IPR036150">
    <property type="entry name" value="Cyt_b/b6_C_sf"/>
</dbReference>
<dbReference type="InterPro" id="IPR005797">
    <property type="entry name" value="Cyt_b/b6_N"/>
</dbReference>
<dbReference type="InterPro" id="IPR027387">
    <property type="entry name" value="Cytb/b6-like_sf"/>
</dbReference>
<dbReference type="InterPro" id="IPR030689">
    <property type="entry name" value="Cytochrome_b"/>
</dbReference>
<dbReference type="InterPro" id="IPR048260">
    <property type="entry name" value="Cytochrome_b_C_euk/bac"/>
</dbReference>
<dbReference type="InterPro" id="IPR048259">
    <property type="entry name" value="Cytochrome_b_N_euk/bac"/>
</dbReference>
<dbReference type="InterPro" id="IPR016174">
    <property type="entry name" value="Di-haem_cyt_TM"/>
</dbReference>
<dbReference type="PANTHER" id="PTHR19271">
    <property type="entry name" value="CYTOCHROME B"/>
    <property type="match status" value="1"/>
</dbReference>
<dbReference type="PANTHER" id="PTHR19271:SF16">
    <property type="entry name" value="CYTOCHROME B"/>
    <property type="match status" value="1"/>
</dbReference>
<dbReference type="Pfam" id="PF00032">
    <property type="entry name" value="Cytochrom_B_C"/>
    <property type="match status" value="1"/>
</dbReference>
<dbReference type="Pfam" id="PF00033">
    <property type="entry name" value="Cytochrome_B"/>
    <property type="match status" value="1"/>
</dbReference>
<dbReference type="PIRSF" id="PIRSF038885">
    <property type="entry name" value="COB"/>
    <property type="match status" value="1"/>
</dbReference>
<dbReference type="SUPFAM" id="SSF81648">
    <property type="entry name" value="a domain/subunit of cytochrome bc1 complex (Ubiquinol-cytochrome c reductase)"/>
    <property type="match status" value="1"/>
</dbReference>
<dbReference type="SUPFAM" id="SSF81342">
    <property type="entry name" value="Transmembrane di-heme cytochromes"/>
    <property type="match status" value="1"/>
</dbReference>
<dbReference type="PROSITE" id="PS51003">
    <property type="entry name" value="CYTB_CTER"/>
    <property type="match status" value="1"/>
</dbReference>
<dbReference type="PROSITE" id="PS51002">
    <property type="entry name" value="CYTB_NTER"/>
    <property type="match status" value="1"/>
</dbReference>
<accession>Q4VUV4</accession>
<protein>
    <recommendedName>
        <fullName>Cytochrome b</fullName>
    </recommendedName>
    <alternativeName>
        <fullName>Complex III subunit 3</fullName>
    </alternativeName>
    <alternativeName>
        <fullName>Complex III subunit III</fullName>
    </alternativeName>
    <alternativeName>
        <fullName>Cytochrome b-c1 complex subunit 3</fullName>
    </alternativeName>
    <alternativeName>
        <fullName>Ubiquinol-cytochrome-c reductase complex cytochrome b subunit</fullName>
    </alternativeName>
</protein>
<comment type="function">
    <text evidence="2">Component of the ubiquinol-cytochrome c reductase complex (complex III or cytochrome b-c1 complex) that is part of the mitochondrial respiratory chain. The b-c1 complex mediates electron transfer from ubiquinol to cytochrome c. Contributes to the generation of a proton gradient across the mitochondrial membrane that is then used for ATP synthesis.</text>
</comment>
<comment type="cofactor">
    <cofactor evidence="2">
        <name>heme b</name>
        <dbReference type="ChEBI" id="CHEBI:60344"/>
    </cofactor>
    <text evidence="2">Binds 2 heme b groups non-covalently.</text>
</comment>
<comment type="subunit">
    <text evidence="2">The cytochrome bc1 complex contains 11 subunits: 3 respiratory subunits (MT-CYB, CYC1 and UQCRFS1), 2 core proteins (UQCRC1 and UQCRC2) and 6 low-molecular weight proteins (UQCRH/QCR6, UQCRB/QCR7, UQCRQ/QCR8, UQCR10/QCR9, UQCR11/QCR10 and a cleavage product of UQCRFS1). This cytochrome bc1 complex then forms a dimer.</text>
</comment>
<comment type="subcellular location">
    <subcellularLocation>
        <location evidence="2">Mitochondrion inner membrane</location>
        <topology evidence="2">Multi-pass membrane protein</topology>
    </subcellularLocation>
</comment>
<comment type="miscellaneous">
    <text evidence="1">Heme 1 (or BL or b562) is low-potential and absorbs at about 562 nm, and heme 2 (or BH or b566) is high-potential and absorbs at about 566 nm.</text>
</comment>
<comment type="similarity">
    <text evidence="3 4">Belongs to the cytochrome b family.</text>
</comment>
<comment type="caution">
    <text evidence="2">The full-length protein contains only eight transmembrane helices, not nine as predicted by bioinformatics tools.</text>
</comment>
<organism>
    <name type="scientific">Natalus tumidirostris</name>
    <name type="common">Trinidadian funnel-eared bat</name>
    <dbReference type="NCBI Taxonomy" id="59487"/>
    <lineage>
        <taxon>Eukaryota</taxon>
        <taxon>Metazoa</taxon>
        <taxon>Chordata</taxon>
        <taxon>Craniata</taxon>
        <taxon>Vertebrata</taxon>
        <taxon>Euteleostomi</taxon>
        <taxon>Mammalia</taxon>
        <taxon>Eutheria</taxon>
        <taxon>Laurasiatheria</taxon>
        <taxon>Chiroptera</taxon>
        <taxon>Yangochiroptera</taxon>
        <taxon>Natalidae</taxon>
        <taxon>Natalus</taxon>
    </lineage>
</organism>
<gene>
    <name type="primary">MT-CYB</name>
    <name type="synonym">COB</name>
    <name type="synonym">CYTB</name>
    <name type="synonym">MTCYB</name>
</gene>
<evidence type="ECO:0000250" key="1"/>
<evidence type="ECO:0000250" key="2">
    <source>
        <dbReference type="UniProtKB" id="P00157"/>
    </source>
</evidence>
<evidence type="ECO:0000255" key="3">
    <source>
        <dbReference type="PROSITE-ProRule" id="PRU00967"/>
    </source>
</evidence>
<evidence type="ECO:0000255" key="4">
    <source>
        <dbReference type="PROSITE-ProRule" id="PRU00968"/>
    </source>
</evidence>
<geneLocation type="mitochondrion"/>
<feature type="chain" id="PRO_0000254835" description="Cytochrome b">
    <location>
        <begin position="1"/>
        <end position="379"/>
    </location>
</feature>
<feature type="transmembrane region" description="Helical" evidence="2">
    <location>
        <begin position="33"/>
        <end position="53"/>
    </location>
</feature>
<feature type="transmembrane region" description="Helical" evidence="2">
    <location>
        <begin position="77"/>
        <end position="98"/>
    </location>
</feature>
<feature type="transmembrane region" description="Helical" evidence="2">
    <location>
        <begin position="113"/>
        <end position="133"/>
    </location>
</feature>
<feature type="transmembrane region" description="Helical" evidence="2">
    <location>
        <begin position="178"/>
        <end position="198"/>
    </location>
</feature>
<feature type="transmembrane region" description="Helical" evidence="2">
    <location>
        <begin position="226"/>
        <end position="246"/>
    </location>
</feature>
<feature type="transmembrane region" description="Helical" evidence="2">
    <location>
        <begin position="288"/>
        <end position="308"/>
    </location>
</feature>
<feature type="transmembrane region" description="Helical" evidence="2">
    <location>
        <begin position="320"/>
        <end position="340"/>
    </location>
</feature>
<feature type="transmembrane region" description="Helical" evidence="2">
    <location>
        <begin position="347"/>
        <end position="367"/>
    </location>
</feature>
<feature type="binding site" description="axial binding residue" evidence="2">
    <location>
        <position position="83"/>
    </location>
    <ligand>
        <name>heme b</name>
        <dbReference type="ChEBI" id="CHEBI:60344"/>
        <label>b562</label>
    </ligand>
    <ligandPart>
        <name>Fe</name>
        <dbReference type="ChEBI" id="CHEBI:18248"/>
    </ligandPart>
</feature>
<feature type="binding site" description="axial binding residue" evidence="2">
    <location>
        <position position="97"/>
    </location>
    <ligand>
        <name>heme b</name>
        <dbReference type="ChEBI" id="CHEBI:60344"/>
        <label>b566</label>
    </ligand>
    <ligandPart>
        <name>Fe</name>
        <dbReference type="ChEBI" id="CHEBI:18248"/>
    </ligandPart>
</feature>
<feature type="binding site" description="axial binding residue" evidence="2">
    <location>
        <position position="182"/>
    </location>
    <ligand>
        <name>heme b</name>
        <dbReference type="ChEBI" id="CHEBI:60344"/>
        <label>b562</label>
    </ligand>
    <ligandPart>
        <name>Fe</name>
        <dbReference type="ChEBI" id="CHEBI:18248"/>
    </ligandPart>
</feature>
<feature type="binding site" description="axial binding residue" evidence="2">
    <location>
        <position position="196"/>
    </location>
    <ligand>
        <name>heme b</name>
        <dbReference type="ChEBI" id="CHEBI:60344"/>
        <label>b566</label>
    </ligand>
    <ligandPart>
        <name>Fe</name>
        <dbReference type="ChEBI" id="CHEBI:18248"/>
    </ligandPart>
</feature>
<feature type="binding site" evidence="2">
    <location>
        <position position="201"/>
    </location>
    <ligand>
        <name>a ubiquinone</name>
        <dbReference type="ChEBI" id="CHEBI:16389"/>
    </ligand>
</feature>
<reference key="1">
    <citation type="journal article" date="2005" name="Mol. Phylogenet. Evol.">
        <title>Molecular phylogeny of funnel-eared bats (Chiroptera: Natalidae), with notes on biogeography and conservation.</title>
        <authorList>
            <person name="Davalos L.M."/>
        </authorList>
    </citation>
    <scope>NUCLEOTIDE SEQUENCE [GENOMIC DNA]</scope>
</reference>